<gene>
    <name evidence="1" type="primary">pyrG</name>
    <name type="synonym">ctrA</name>
    <name type="ordered locus">BT9727_5022</name>
</gene>
<proteinExistence type="inferred from homology"/>
<sequence>MTKYIFVTGGVVSSLGKGITAASLGRLLKNRGLNVTIQKFDPYINVDPGTMSPYQHGEVFVTDDGAETDLDLGHYERFIDINLNKYSNVTTGKIYSSVLQKERRGEYLGGTVQVIPHITNEIKERVYRSGRETNADVVITEIGGTVGDIESLPFLEAIRQIKSDIGRDNVMYIHCTLIPYLKAAGEMKTKPTQHSVKELRSLGIQPNIIVVRTEMPVSQDMKDKLALFCDIDTKAVIEARDADTLYAVPLSLQEQNMDQIVCDHLKLDNPAADMTEWTALVEKVRNLSKKTKIALVGKYVELQDAYISVVEALRHAGYSFDTDVEVKWVNAEHVTAENVQELVGDTDGILVPGGFGDRGVEGKIVAIQYARENKVPFLGICLGMQLASIEFARNVLGLEGANSSEINPDTPYAIIDLLPEQKDVEDLGGTLRLGLYPCKLSEETNAYNAYNEPVVYERHRHRYEFNNQFRPDMEKEGFVFSGTSPDGRLVEIIELKDHPWFVAAQFHPELVSRPNRPQPLFHDFVKASITNKESK</sequence>
<feature type="chain" id="PRO_0000266061" description="CTP synthase">
    <location>
        <begin position="1"/>
        <end position="535"/>
    </location>
</feature>
<feature type="domain" description="Glutamine amidotransferase type-1" evidence="1">
    <location>
        <begin position="292"/>
        <end position="534"/>
    </location>
</feature>
<feature type="region of interest" description="Amidoligase domain" evidence="1">
    <location>
        <begin position="1"/>
        <end position="267"/>
    </location>
</feature>
<feature type="active site" description="Nucleophile; for glutamine hydrolysis" evidence="1">
    <location>
        <position position="381"/>
    </location>
</feature>
<feature type="active site" evidence="1">
    <location>
        <position position="507"/>
    </location>
</feature>
<feature type="active site" evidence="1">
    <location>
        <position position="509"/>
    </location>
</feature>
<feature type="binding site" evidence="1">
    <location>
        <position position="13"/>
    </location>
    <ligand>
        <name>CTP</name>
        <dbReference type="ChEBI" id="CHEBI:37563"/>
        <note>allosteric inhibitor</note>
    </ligand>
</feature>
<feature type="binding site" evidence="1">
    <location>
        <position position="13"/>
    </location>
    <ligand>
        <name>UTP</name>
        <dbReference type="ChEBI" id="CHEBI:46398"/>
    </ligand>
</feature>
<feature type="binding site" evidence="1">
    <location>
        <begin position="14"/>
        <end position="19"/>
    </location>
    <ligand>
        <name>ATP</name>
        <dbReference type="ChEBI" id="CHEBI:30616"/>
    </ligand>
</feature>
<feature type="binding site" evidence="1">
    <location>
        <position position="54"/>
    </location>
    <ligand>
        <name>L-glutamine</name>
        <dbReference type="ChEBI" id="CHEBI:58359"/>
    </ligand>
</feature>
<feature type="binding site" evidence="1">
    <location>
        <position position="71"/>
    </location>
    <ligand>
        <name>ATP</name>
        <dbReference type="ChEBI" id="CHEBI:30616"/>
    </ligand>
</feature>
<feature type="binding site" evidence="1">
    <location>
        <position position="71"/>
    </location>
    <ligand>
        <name>Mg(2+)</name>
        <dbReference type="ChEBI" id="CHEBI:18420"/>
    </ligand>
</feature>
<feature type="binding site" evidence="1">
    <location>
        <position position="141"/>
    </location>
    <ligand>
        <name>Mg(2+)</name>
        <dbReference type="ChEBI" id="CHEBI:18420"/>
    </ligand>
</feature>
<feature type="binding site" evidence="1">
    <location>
        <begin position="148"/>
        <end position="150"/>
    </location>
    <ligand>
        <name>CTP</name>
        <dbReference type="ChEBI" id="CHEBI:37563"/>
        <note>allosteric inhibitor</note>
    </ligand>
</feature>
<feature type="binding site" evidence="1">
    <location>
        <begin position="188"/>
        <end position="193"/>
    </location>
    <ligand>
        <name>CTP</name>
        <dbReference type="ChEBI" id="CHEBI:37563"/>
        <note>allosteric inhibitor</note>
    </ligand>
</feature>
<feature type="binding site" evidence="1">
    <location>
        <begin position="188"/>
        <end position="193"/>
    </location>
    <ligand>
        <name>UTP</name>
        <dbReference type="ChEBI" id="CHEBI:46398"/>
    </ligand>
</feature>
<feature type="binding site" evidence="1">
    <location>
        <position position="224"/>
    </location>
    <ligand>
        <name>CTP</name>
        <dbReference type="ChEBI" id="CHEBI:37563"/>
        <note>allosteric inhibitor</note>
    </ligand>
</feature>
<feature type="binding site" evidence="1">
    <location>
        <position position="224"/>
    </location>
    <ligand>
        <name>UTP</name>
        <dbReference type="ChEBI" id="CHEBI:46398"/>
    </ligand>
</feature>
<feature type="binding site" evidence="1">
    <location>
        <begin position="240"/>
        <end position="242"/>
    </location>
    <ligand>
        <name>ATP</name>
        <dbReference type="ChEBI" id="CHEBI:30616"/>
    </ligand>
</feature>
<feature type="binding site" evidence="1">
    <location>
        <position position="354"/>
    </location>
    <ligand>
        <name>L-glutamine</name>
        <dbReference type="ChEBI" id="CHEBI:58359"/>
    </ligand>
</feature>
<feature type="binding site" evidence="1">
    <location>
        <begin position="382"/>
        <end position="385"/>
    </location>
    <ligand>
        <name>L-glutamine</name>
        <dbReference type="ChEBI" id="CHEBI:58359"/>
    </ligand>
</feature>
<feature type="binding site" evidence="1">
    <location>
        <position position="405"/>
    </location>
    <ligand>
        <name>L-glutamine</name>
        <dbReference type="ChEBI" id="CHEBI:58359"/>
    </ligand>
</feature>
<feature type="binding site" evidence="1">
    <location>
        <position position="462"/>
    </location>
    <ligand>
        <name>L-glutamine</name>
        <dbReference type="ChEBI" id="CHEBI:58359"/>
    </ligand>
</feature>
<organism>
    <name type="scientific">Bacillus thuringiensis subsp. konkukian (strain 97-27)</name>
    <dbReference type="NCBI Taxonomy" id="281309"/>
    <lineage>
        <taxon>Bacteria</taxon>
        <taxon>Bacillati</taxon>
        <taxon>Bacillota</taxon>
        <taxon>Bacilli</taxon>
        <taxon>Bacillales</taxon>
        <taxon>Bacillaceae</taxon>
        <taxon>Bacillus</taxon>
        <taxon>Bacillus cereus group</taxon>
    </lineage>
</organism>
<name>PYRG_BACHK</name>
<accession>Q6HAU5</accession>
<protein>
    <recommendedName>
        <fullName evidence="1">CTP synthase</fullName>
        <ecNumber evidence="1">6.3.4.2</ecNumber>
    </recommendedName>
    <alternativeName>
        <fullName evidence="1">Cytidine 5'-triphosphate synthase</fullName>
    </alternativeName>
    <alternativeName>
        <fullName evidence="1">Cytidine triphosphate synthetase</fullName>
        <shortName evidence="1">CTP synthetase</shortName>
        <shortName evidence="1">CTPS</shortName>
    </alternativeName>
    <alternativeName>
        <fullName evidence="1">UTP--ammonia ligase</fullName>
    </alternativeName>
</protein>
<comment type="function">
    <text evidence="1">Catalyzes the ATP-dependent amination of UTP to CTP with either L-glutamine or ammonia as the source of nitrogen. Regulates intracellular CTP levels through interactions with the four ribonucleotide triphosphates.</text>
</comment>
<comment type="catalytic activity">
    <reaction evidence="1">
        <text>UTP + L-glutamine + ATP + H2O = CTP + L-glutamate + ADP + phosphate + 2 H(+)</text>
        <dbReference type="Rhea" id="RHEA:26426"/>
        <dbReference type="ChEBI" id="CHEBI:15377"/>
        <dbReference type="ChEBI" id="CHEBI:15378"/>
        <dbReference type="ChEBI" id="CHEBI:29985"/>
        <dbReference type="ChEBI" id="CHEBI:30616"/>
        <dbReference type="ChEBI" id="CHEBI:37563"/>
        <dbReference type="ChEBI" id="CHEBI:43474"/>
        <dbReference type="ChEBI" id="CHEBI:46398"/>
        <dbReference type="ChEBI" id="CHEBI:58359"/>
        <dbReference type="ChEBI" id="CHEBI:456216"/>
        <dbReference type="EC" id="6.3.4.2"/>
    </reaction>
</comment>
<comment type="catalytic activity">
    <reaction evidence="1">
        <text>L-glutamine + H2O = L-glutamate + NH4(+)</text>
        <dbReference type="Rhea" id="RHEA:15889"/>
        <dbReference type="ChEBI" id="CHEBI:15377"/>
        <dbReference type="ChEBI" id="CHEBI:28938"/>
        <dbReference type="ChEBI" id="CHEBI:29985"/>
        <dbReference type="ChEBI" id="CHEBI:58359"/>
    </reaction>
</comment>
<comment type="catalytic activity">
    <reaction evidence="1">
        <text>UTP + NH4(+) + ATP = CTP + ADP + phosphate + 2 H(+)</text>
        <dbReference type="Rhea" id="RHEA:16597"/>
        <dbReference type="ChEBI" id="CHEBI:15378"/>
        <dbReference type="ChEBI" id="CHEBI:28938"/>
        <dbReference type="ChEBI" id="CHEBI:30616"/>
        <dbReference type="ChEBI" id="CHEBI:37563"/>
        <dbReference type="ChEBI" id="CHEBI:43474"/>
        <dbReference type="ChEBI" id="CHEBI:46398"/>
        <dbReference type="ChEBI" id="CHEBI:456216"/>
    </reaction>
</comment>
<comment type="activity regulation">
    <text evidence="1">Allosterically activated by GTP, when glutamine is the substrate; GTP has no effect on the reaction when ammonia is the substrate. The allosteric effector GTP functions by stabilizing the protein conformation that binds the tetrahedral intermediate(s) formed during glutamine hydrolysis. Inhibited by the product CTP, via allosteric rather than competitive inhibition.</text>
</comment>
<comment type="pathway">
    <text evidence="1">Pyrimidine metabolism; CTP biosynthesis via de novo pathway; CTP from UDP: step 2/2.</text>
</comment>
<comment type="subunit">
    <text evidence="1">Homotetramer.</text>
</comment>
<comment type="miscellaneous">
    <text evidence="1">CTPSs have evolved a hybrid strategy for distinguishing between UTP and CTP. The overlapping regions of the product feedback inhibitory and substrate sites recognize a common feature in both compounds, the triphosphate moiety. To differentiate isosteric substrate and product pyrimidine rings, an additional pocket far from the expected kinase/ligase catalytic site, specifically recognizes the cytosine and ribose portions of the product inhibitor.</text>
</comment>
<comment type="similarity">
    <text evidence="1">Belongs to the CTP synthase family.</text>
</comment>
<dbReference type="EC" id="6.3.4.2" evidence="1"/>
<dbReference type="EMBL" id="AE017355">
    <property type="protein sequence ID" value="AAT62621.1"/>
    <property type="molecule type" value="Genomic_DNA"/>
</dbReference>
<dbReference type="RefSeq" id="WP_000170458.1">
    <property type="nucleotide sequence ID" value="NC_005957.1"/>
</dbReference>
<dbReference type="RefSeq" id="YP_039331.1">
    <property type="nucleotide sequence ID" value="NC_005957.1"/>
</dbReference>
<dbReference type="SMR" id="Q6HAU5"/>
<dbReference type="KEGG" id="btk:BT9727_5022"/>
<dbReference type="PATRIC" id="fig|281309.8.peg.5342"/>
<dbReference type="HOGENOM" id="CLU_011675_5_0_9"/>
<dbReference type="UniPathway" id="UPA00159">
    <property type="reaction ID" value="UER00277"/>
</dbReference>
<dbReference type="Proteomes" id="UP000001301">
    <property type="component" value="Chromosome"/>
</dbReference>
<dbReference type="GO" id="GO:0005829">
    <property type="term" value="C:cytosol"/>
    <property type="evidence" value="ECO:0007669"/>
    <property type="project" value="TreeGrafter"/>
</dbReference>
<dbReference type="GO" id="GO:0005524">
    <property type="term" value="F:ATP binding"/>
    <property type="evidence" value="ECO:0007669"/>
    <property type="project" value="UniProtKB-KW"/>
</dbReference>
<dbReference type="GO" id="GO:0003883">
    <property type="term" value="F:CTP synthase activity"/>
    <property type="evidence" value="ECO:0007669"/>
    <property type="project" value="UniProtKB-UniRule"/>
</dbReference>
<dbReference type="GO" id="GO:0004359">
    <property type="term" value="F:glutaminase activity"/>
    <property type="evidence" value="ECO:0007669"/>
    <property type="project" value="RHEA"/>
</dbReference>
<dbReference type="GO" id="GO:0042802">
    <property type="term" value="F:identical protein binding"/>
    <property type="evidence" value="ECO:0007669"/>
    <property type="project" value="TreeGrafter"/>
</dbReference>
<dbReference type="GO" id="GO:0046872">
    <property type="term" value="F:metal ion binding"/>
    <property type="evidence" value="ECO:0007669"/>
    <property type="project" value="UniProtKB-KW"/>
</dbReference>
<dbReference type="GO" id="GO:0044210">
    <property type="term" value="P:'de novo' CTP biosynthetic process"/>
    <property type="evidence" value="ECO:0007669"/>
    <property type="project" value="UniProtKB-UniRule"/>
</dbReference>
<dbReference type="GO" id="GO:0019856">
    <property type="term" value="P:pyrimidine nucleobase biosynthetic process"/>
    <property type="evidence" value="ECO:0007669"/>
    <property type="project" value="TreeGrafter"/>
</dbReference>
<dbReference type="CDD" id="cd03113">
    <property type="entry name" value="CTPS_N"/>
    <property type="match status" value="1"/>
</dbReference>
<dbReference type="CDD" id="cd01746">
    <property type="entry name" value="GATase1_CTP_Synthase"/>
    <property type="match status" value="1"/>
</dbReference>
<dbReference type="FunFam" id="3.40.50.300:FF:000009">
    <property type="entry name" value="CTP synthase"/>
    <property type="match status" value="1"/>
</dbReference>
<dbReference type="FunFam" id="3.40.50.880:FF:000002">
    <property type="entry name" value="CTP synthase"/>
    <property type="match status" value="1"/>
</dbReference>
<dbReference type="Gene3D" id="3.40.50.880">
    <property type="match status" value="1"/>
</dbReference>
<dbReference type="Gene3D" id="3.40.50.300">
    <property type="entry name" value="P-loop containing nucleotide triphosphate hydrolases"/>
    <property type="match status" value="1"/>
</dbReference>
<dbReference type="HAMAP" id="MF_01227">
    <property type="entry name" value="PyrG"/>
    <property type="match status" value="1"/>
</dbReference>
<dbReference type="InterPro" id="IPR029062">
    <property type="entry name" value="Class_I_gatase-like"/>
</dbReference>
<dbReference type="InterPro" id="IPR004468">
    <property type="entry name" value="CTP_synthase"/>
</dbReference>
<dbReference type="InterPro" id="IPR017456">
    <property type="entry name" value="CTP_synthase_N"/>
</dbReference>
<dbReference type="InterPro" id="IPR017926">
    <property type="entry name" value="GATASE"/>
</dbReference>
<dbReference type="InterPro" id="IPR033828">
    <property type="entry name" value="GATase1_CTP_Synthase"/>
</dbReference>
<dbReference type="InterPro" id="IPR027417">
    <property type="entry name" value="P-loop_NTPase"/>
</dbReference>
<dbReference type="NCBIfam" id="NF003792">
    <property type="entry name" value="PRK05380.1"/>
    <property type="match status" value="1"/>
</dbReference>
<dbReference type="NCBIfam" id="TIGR00337">
    <property type="entry name" value="PyrG"/>
    <property type="match status" value="1"/>
</dbReference>
<dbReference type="PANTHER" id="PTHR11550">
    <property type="entry name" value="CTP SYNTHASE"/>
    <property type="match status" value="1"/>
</dbReference>
<dbReference type="PANTHER" id="PTHR11550:SF0">
    <property type="entry name" value="CTP SYNTHASE-RELATED"/>
    <property type="match status" value="1"/>
</dbReference>
<dbReference type="Pfam" id="PF06418">
    <property type="entry name" value="CTP_synth_N"/>
    <property type="match status" value="1"/>
</dbReference>
<dbReference type="Pfam" id="PF00117">
    <property type="entry name" value="GATase"/>
    <property type="match status" value="1"/>
</dbReference>
<dbReference type="SUPFAM" id="SSF52317">
    <property type="entry name" value="Class I glutamine amidotransferase-like"/>
    <property type="match status" value="1"/>
</dbReference>
<dbReference type="SUPFAM" id="SSF52540">
    <property type="entry name" value="P-loop containing nucleoside triphosphate hydrolases"/>
    <property type="match status" value="1"/>
</dbReference>
<dbReference type="PROSITE" id="PS51273">
    <property type="entry name" value="GATASE_TYPE_1"/>
    <property type="match status" value="1"/>
</dbReference>
<keyword id="KW-0067">ATP-binding</keyword>
<keyword id="KW-0315">Glutamine amidotransferase</keyword>
<keyword id="KW-0436">Ligase</keyword>
<keyword id="KW-0460">Magnesium</keyword>
<keyword id="KW-0479">Metal-binding</keyword>
<keyword id="KW-0547">Nucleotide-binding</keyword>
<keyword id="KW-0665">Pyrimidine biosynthesis</keyword>
<reference key="1">
    <citation type="journal article" date="2006" name="J. Bacteriol.">
        <title>Pathogenomic sequence analysis of Bacillus cereus and Bacillus thuringiensis isolates closely related to Bacillus anthracis.</title>
        <authorList>
            <person name="Han C.S."/>
            <person name="Xie G."/>
            <person name="Challacombe J.F."/>
            <person name="Altherr M.R."/>
            <person name="Bhotika S.S."/>
            <person name="Bruce D."/>
            <person name="Campbell C.S."/>
            <person name="Campbell M.L."/>
            <person name="Chen J."/>
            <person name="Chertkov O."/>
            <person name="Cleland C."/>
            <person name="Dimitrijevic M."/>
            <person name="Doggett N.A."/>
            <person name="Fawcett J.J."/>
            <person name="Glavina T."/>
            <person name="Goodwin L.A."/>
            <person name="Hill K.K."/>
            <person name="Hitchcock P."/>
            <person name="Jackson P.J."/>
            <person name="Keim P."/>
            <person name="Kewalramani A.R."/>
            <person name="Longmire J."/>
            <person name="Lucas S."/>
            <person name="Malfatti S."/>
            <person name="McMurry K."/>
            <person name="Meincke L.J."/>
            <person name="Misra M."/>
            <person name="Moseman B.L."/>
            <person name="Mundt M."/>
            <person name="Munk A.C."/>
            <person name="Okinaka R.T."/>
            <person name="Parson-Quintana B."/>
            <person name="Reilly L.P."/>
            <person name="Richardson P."/>
            <person name="Robinson D.L."/>
            <person name="Rubin E."/>
            <person name="Saunders E."/>
            <person name="Tapia R."/>
            <person name="Tesmer J.G."/>
            <person name="Thayer N."/>
            <person name="Thompson L.S."/>
            <person name="Tice H."/>
            <person name="Ticknor L.O."/>
            <person name="Wills P.L."/>
            <person name="Brettin T.S."/>
            <person name="Gilna P."/>
        </authorList>
    </citation>
    <scope>NUCLEOTIDE SEQUENCE [LARGE SCALE GENOMIC DNA]</scope>
    <source>
        <strain>97-27</strain>
    </source>
</reference>
<evidence type="ECO:0000255" key="1">
    <source>
        <dbReference type="HAMAP-Rule" id="MF_01227"/>
    </source>
</evidence>